<dbReference type="EC" id="6.1.1.19" evidence="1"/>
<dbReference type="EMBL" id="CP000435">
    <property type="protein sequence ID" value="ABI47463.1"/>
    <property type="molecule type" value="Genomic_DNA"/>
</dbReference>
<dbReference type="RefSeq" id="WP_011620559.1">
    <property type="nucleotide sequence ID" value="NC_008319.1"/>
</dbReference>
<dbReference type="SMR" id="Q0I6R7"/>
<dbReference type="STRING" id="64471.sync_2667"/>
<dbReference type="KEGG" id="syg:sync_2667"/>
<dbReference type="eggNOG" id="COG0018">
    <property type="taxonomic scope" value="Bacteria"/>
</dbReference>
<dbReference type="HOGENOM" id="CLU_006406_5_1_3"/>
<dbReference type="OrthoDB" id="9805987at2"/>
<dbReference type="Proteomes" id="UP000001961">
    <property type="component" value="Chromosome"/>
</dbReference>
<dbReference type="GO" id="GO:0005737">
    <property type="term" value="C:cytoplasm"/>
    <property type="evidence" value="ECO:0007669"/>
    <property type="project" value="UniProtKB-SubCell"/>
</dbReference>
<dbReference type="GO" id="GO:0004814">
    <property type="term" value="F:arginine-tRNA ligase activity"/>
    <property type="evidence" value="ECO:0007669"/>
    <property type="project" value="UniProtKB-UniRule"/>
</dbReference>
<dbReference type="GO" id="GO:0005524">
    <property type="term" value="F:ATP binding"/>
    <property type="evidence" value="ECO:0007669"/>
    <property type="project" value="UniProtKB-UniRule"/>
</dbReference>
<dbReference type="GO" id="GO:0006420">
    <property type="term" value="P:arginyl-tRNA aminoacylation"/>
    <property type="evidence" value="ECO:0007669"/>
    <property type="project" value="UniProtKB-UniRule"/>
</dbReference>
<dbReference type="CDD" id="cd07956">
    <property type="entry name" value="Anticodon_Ia_Arg"/>
    <property type="match status" value="1"/>
</dbReference>
<dbReference type="CDD" id="cd00671">
    <property type="entry name" value="ArgRS_core"/>
    <property type="match status" value="1"/>
</dbReference>
<dbReference type="FunFam" id="3.40.50.620:FF:000030">
    <property type="entry name" value="Arginine--tRNA ligase"/>
    <property type="match status" value="1"/>
</dbReference>
<dbReference type="FunFam" id="1.10.730.10:FF:000006">
    <property type="entry name" value="Arginyl-tRNA synthetase 2, mitochondrial"/>
    <property type="match status" value="1"/>
</dbReference>
<dbReference type="Gene3D" id="3.30.1360.70">
    <property type="entry name" value="Arginyl tRNA synthetase N-terminal domain"/>
    <property type="match status" value="1"/>
</dbReference>
<dbReference type="Gene3D" id="3.40.50.620">
    <property type="entry name" value="HUPs"/>
    <property type="match status" value="1"/>
</dbReference>
<dbReference type="Gene3D" id="1.10.730.10">
    <property type="entry name" value="Isoleucyl-tRNA Synthetase, Domain 1"/>
    <property type="match status" value="1"/>
</dbReference>
<dbReference type="HAMAP" id="MF_00123">
    <property type="entry name" value="Arg_tRNA_synth"/>
    <property type="match status" value="1"/>
</dbReference>
<dbReference type="InterPro" id="IPR001412">
    <property type="entry name" value="aa-tRNA-synth_I_CS"/>
</dbReference>
<dbReference type="InterPro" id="IPR001278">
    <property type="entry name" value="Arg-tRNA-ligase"/>
</dbReference>
<dbReference type="InterPro" id="IPR005148">
    <property type="entry name" value="Arg-tRNA-synth_N"/>
</dbReference>
<dbReference type="InterPro" id="IPR036695">
    <property type="entry name" value="Arg-tRNA-synth_N_sf"/>
</dbReference>
<dbReference type="InterPro" id="IPR035684">
    <property type="entry name" value="ArgRS_core"/>
</dbReference>
<dbReference type="InterPro" id="IPR008909">
    <property type="entry name" value="DALR_anticod-bd"/>
</dbReference>
<dbReference type="InterPro" id="IPR014729">
    <property type="entry name" value="Rossmann-like_a/b/a_fold"/>
</dbReference>
<dbReference type="InterPro" id="IPR009080">
    <property type="entry name" value="tRNAsynth_Ia_anticodon-bd"/>
</dbReference>
<dbReference type="NCBIfam" id="TIGR00456">
    <property type="entry name" value="argS"/>
    <property type="match status" value="1"/>
</dbReference>
<dbReference type="PANTHER" id="PTHR11956:SF5">
    <property type="entry name" value="ARGININE--TRNA LIGASE, CYTOPLASMIC"/>
    <property type="match status" value="1"/>
</dbReference>
<dbReference type="PANTHER" id="PTHR11956">
    <property type="entry name" value="ARGINYL-TRNA SYNTHETASE"/>
    <property type="match status" value="1"/>
</dbReference>
<dbReference type="Pfam" id="PF03485">
    <property type="entry name" value="Arg_tRNA_synt_N"/>
    <property type="match status" value="1"/>
</dbReference>
<dbReference type="Pfam" id="PF05746">
    <property type="entry name" value="DALR_1"/>
    <property type="match status" value="1"/>
</dbReference>
<dbReference type="Pfam" id="PF00750">
    <property type="entry name" value="tRNA-synt_1d"/>
    <property type="match status" value="1"/>
</dbReference>
<dbReference type="PRINTS" id="PR01038">
    <property type="entry name" value="TRNASYNTHARG"/>
</dbReference>
<dbReference type="SMART" id="SM01016">
    <property type="entry name" value="Arg_tRNA_synt_N"/>
    <property type="match status" value="1"/>
</dbReference>
<dbReference type="SMART" id="SM00836">
    <property type="entry name" value="DALR_1"/>
    <property type="match status" value="1"/>
</dbReference>
<dbReference type="SUPFAM" id="SSF47323">
    <property type="entry name" value="Anticodon-binding domain of a subclass of class I aminoacyl-tRNA synthetases"/>
    <property type="match status" value="1"/>
</dbReference>
<dbReference type="SUPFAM" id="SSF55190">
    <property type="entry name" value="Arginyl-tRNA synthetase (ArgRS), N-terminal 'additional' domain"/>
    <property type="match status" value="1"/>
</dbReference>
<dbReference type="SUPFAM" id="SSF52374">
    <property type="entry name" value="Nucleotidylyl transferase"/>
    <property type="match status" value="1"/>
</dbReference>
<dbReference type="PROSITE" id="PS00178">
    <property type="entry name" value="AA_TRNA_LIGASE_I"/>
    <property type="match status" value="1"/>
</dbReference>
<sequence length="590" mass="65145">MLRIAQALDTQLREAMQRAFPDVDALLDPQLAPANKPEFGDFQANGALPLAKPLKQAPRLIAGAIVEALQADPAFAALCLEPQIAGPGFINLTIRPERLAAEVSARLGDPRLGVPEVQSDAAVVVDFSSPNIAKEMHVGHLRSTIIGDSLARVLEFRGHRVLRLNHVGDWGTQFGMLITHLKQVAPETLNRADAVDLGDLVAFYREAKKRFDEDEAFQATSREEVVKLQGGDPVSLKAWGLLCDQSRREFQKIYDRLDIRLSERGESFYNPYLASVLSGLKEADLLVTDDGAECVFLEGVNGKDGKPLPVIVRKSDGGFNYATTDLAAIRYRFALAPDGDGARRVIYVTDAGQANHFAGVFQVAKRANWIPEHGRLEHVPFGLVQGEDGKKLKTRSGDTVRLRDLLDEAVERAEADLRRRLEEEGRSEDDQFIEHVAGTVGLAAVKYADLSQNRITNYQFSFDRMLALQGNTAPYLLYAVVRIAGIARKGGDLEAEAGMLQFSEPQEWSLVRELLKFDAVIAEVEEELLPNRLCSYLFELSQVFNRFYDQVPVLKAEGQSLPSRLALCRLTADTLKSGLGLLGIATLERM</sequence>
<feature type="chain" id="PRO_1000018138" description="Arginine--tRNA ligase">
    <location>
        <begin position="1"/>
        <end position="590"/>
    </location>
</feature>
<feature type="short sequence motif" description="'HIGH' region">
    <location>
        <begin position="130"/>
        <end position="140"/>
    </location>
</feature>
<comment type="catalytic activity">
    <reaction evidence="1">
        <text>tRNA(Arg) + L-arginine + ATP = L-arginyl-tRNA(Arg) + AMP + diphosphate</text>
        <dbReference type="Rhea" id="RHEA:20301"/>
        <dbReference type="Rhea" id="RHEA-COMP:9658"/>
        <dbReference type="Rhea" id="RHEA-COMP:9673"/>
        <dbReference type="ChEBI" id="CHEBI:30616"/>
        <dbReference type="ChEBI" id="CHEBI:32682"/>
        <dbReference type="ChEBI" id="CHEBI:33019"/>
        <dbReference type="ChEBI" id="CHEBI:78442"/>
        <dbReference type="ChEBI" id="CHEBI:78513"/>
        <dbReference type="ChEBI" id="CHEBI:456215"/>
        <dbReference type="EC" id="6.1.1.19"/>
    </reaction>
</comment>
<comment type="subunit">
    <text evidence="1">Monomer.</text>
</comment>
<comment type="subcellular location">
    <subcellularLocation>
        <location evidence="1">Cytoplasm</location>
    </subcellularLocation>
</comment>
<comment type="similarity">
    <text evidence="1">Belongs to the class-I aminoacyl-tRNA synthetase family.</text>
</comment>
<name>SYR_SYNS3</name>
<keyword id="KW-0030">Aminoacyl-tRNA synthetase</keyword>
<keyword id="KW-0067">ATP-binding</keyword>
<keyword id="KW-0963">Cytoplasm</keyword>
<keyword id="KW-0436">Ligase</keyword>
<keyword id="KW-0547">Nucleotide-binding</keyword>
<keyword id="KW-0648">Protein biosynthesis</keyword>
<keyword id="KW-1185">Reference proteome</keyword>
<accession>Q0I6R7</accession>
<proteinExistence type="inferred from homology"/>
<evidence type="ECO:0000255" key="1">
    <source>
        <dbReference type="HAMAP-Rule" id="MF_00123"/>
    </source>
</evidence>
<reference key="1">
    <citation type="journal article" date="2006" name="Proc. Natl. Acad. Sci. U.S.A.">
        <title>Genome sequence of Synechococcus CC9311: insights into adaptation to a coastal environment.</title>
        <authorList>
            <person name="Palenik B."/>
            <person name="Ren Q."/>
            <person name="Dupont C.L."/>
            <person name="Myers G.S."/>
            <person name="Heidelberg J.F."/>
            <person name="Badger J.H."/>
            <person name="Madupu R."/>
            <person name="Nelson W.C."/>
            <person name="Brinkac L.M."/>
            <person name="Dodson R.J."/>
            <person name="Durkin A.S."/>
            <person name="Daugherty S.C."/>
            <person name="Sullivan S.A."/>
            <person name="Khouri H."/>
            <person name="Mohamoud Y."/>
            <person name="Halpin R."/>
            <person name="Paulsen I.T."/>
        </authorList>
    </citation>
    <scope>NUCLEOTIDE SEQUENCE [LARGE SCALE GENOMIC DNA]</scope>
    <source>
        <strain>CC9311</strain>
    </source>
</reference>
<protein>
    <recommendedName>
        <fullName evidence="1">Arginine--tRNA ligase</fullName>
        <ecNumber evidence="1">6.1.1.19</ecNumber>
    </recommendedName>
    <alternativeName>
        <fullName evidence="1">Arginyl-tRNA synthetase</fullName>
        <shortName evidence="1">ArgRS</shortName>
    </alternativeName>
</protein>
<gene>
    <name evidence="1" type="primary">argS</name>
    <name type="ordered locus">sync_2667</name>
</gene>
<organism>
    <name type="scientific">Synechococcus sp. (strain CC9311)</name>
    <dbReference type="NCBI Taxonomy" id="64471"/>
    <lineage>
        <taxon>Bacteria</taxon>
        <taxon>Bacillati</taxon>
        <taxon>Cyanobacteriota</taxon>
        <taxon>Cyanophyceae</taxon>
        <taxon>Synechococcales</taxon>
        <taxon>Synechococcaceae</taxon>
        <taxon>Synechococcus</taxon>
    </lineage>
</organism>